<protein>
    <recommendedName>
        <fullName evidence="5">Cytochrome c6</fullName>
    </recommendedName>
    <alternativeName>
        <fullName evidence="5">Cytochrome c-553</fullName>
    </alternativeName>
    <alternativeName>
        <fullName evidence="5">Cytochrome c553</fullName>
    </alternativeName>
    <alternativeName>
        <fullName evidence="5">Soluble cytochrome f</fullName>
    </alternativeName>
</protein>
<keyword id="KW-0150">Chloroplast</keyword>
<keyword id="KW-0903">Direct protein sequencing</keyword>
<keyword id="KW-0249">Electron transport</keyword>
<keyword id="KW-0602">Photosynthesis</keyword>
<keyword id="KW-0934">Plastid</keyword>
<keyword id="KW-0793">Thylakoid</keyword>
<keyword id="KW-0813">Transport</keyword>
<sequence length="15" mass="1567">ADIENGEDIFTANAS</sequence>
<comment type="function">
    <text evidence="2">Functions as an electron carrier between membrane-bound cytochrome b6-f and photosystem I in oxygenic photosynthesis.</text>
</comment>
<comment type="subunit">
    <text evidence="1">Monomer.</text>
</comment>
<comment type="subcellular location">
    <subcellularLocation>
        <location evidence="5">Plastid</location>
        <location evidence="5">Chloroplast thylakoid lumen</location>
    </subcellularLocation>
</comment>
<comment type="induction">
    <text evidence="3">Expression shows a diurnal pattern of oscillation across the 24-hour light-dark, with increased levels during the light period (at protein level).</text>
</comment>
<comment type="similarity">
    <text evidence="5">Belongs to the cytochrome c family. PetJ subfamily.</text>
</comment>
<organism>
    <name type="scientific">Chattonella marina var. antiqua</name>
    <name type="common">Red tide flagellate</name>
    <name type="synonym">Chattonella antiqua</name>
    <dbReference type="NCBI Taxonomy" id="859642"/>
    <lineage>
        <taxon>Eukaryota</taxon>
        <taxon>Sar</taxon>
        <taxon>Stramenopiles</taxon>
        <taxon>Ochrophyta</taxon>
        <taxon>Raphidophyceae</taxon>
        <taxon>Chattonellales</taxon>
        <taxon>Chattonellaceae</taxon>
        <taxon>Chattonella</taxon>
    </lineage>
</organism>
<evidence type="ECO:0000250" key="1">
    <source>
        <dbReference type="UniProtKB" id="P00118"/>
    </source>
</evidence>
<evidence type="ECO:0000250" key="2">
    <source>
        <dbReference type="UniProtKB" id="Q93VA3"/>
    </source>
</evidence>
<evidence type="ECO:0000269" key="3">
    <source ref="1"/>
</evidence>
<evidence type="ECO:0000303" key="4">
    <source ref="1"/>
</evidence>
<evidence type="ECO:0000305" key="5"/>
<dbReference type="GO" id="GO:0009543">
    <property type="term" value="C:chloroplast thylakoid lumen"/>
    <property type="evidence" value="ECO:0007669"/>
    <property type="project" value="UniProtKB-SubCell"/>
</dbReference>
<dbReference type="GO" id="GO:0015979">
    <property type="term" value="P:photosynthesis"/>
    <property type="evidence" value="ECO:0007669"/>
    <property type="project" value="UniProtKB-KW"/>
</dbReference>
<feature type="chain" id="PRO_0000450205" description="Cytochrome c6">
    <location>
        <begin position="1"/>
        <end position="15" status="greater than"/>
    </location>
</feature>
<feature type="non-terminal residue" evidence="4">
    <location>
        <position position="15"/>
    </location>
</feature>
<reference evidence="5" key="1">
    <citation type="journal article" date="2020" name="J. Exp. Mar. Biol. Ecol.">
        <title>Diurnal variations in expression of photosynthesis-related proteins in the harmful Raphidophyceae Chattonella marina var. antiqua.</title>
        <authorList>
            <person name="Qiu X."/>
            <person name="Mukai K."/>
            <person name="Shimasaki Y."/>
            <person name="Wu M."/>
            <person name="Chen C."/>
            <person name="Lu Y."/>
            <person name="Ichinose H."/>
            <person name="Nakashima T."/>
            <person name="Kato-Unoki Y."/>
            <person name="Oshima Y."/>
        </authorList>
    </citation>
    <scope>PROTEIN SEQUENCE</scope>
    <scope>INDUCTION</scope>
    <source>
        <strain evidence="4">NIES-1</strain>
    </source>
</reference>
<name>CYC6_CHAMQ</name>
<accession>C0HLQ5</accession>
<proteinExistence type="evidence at protein level"/>